<proteinExistence type="evidence at protein level"/>
<keyword id="KW-0002">3D-structure</keyword>
<keyword id="KW-0121">Carboxypeptidase</keyword>
<keyword id="KW-0963">Cytoplasm</keyword>
<keyword id="KW-0206">Cytoskeleton</keyword>
<keyword id="KW-0378">Hydrolase</keyword>
<keyword id="KW-0597">Phosphoprotein</keyword>
<keyword id="KW-0645">Protease</keyword>
<keyword id="KW-1185">Reference proteome</keyword>
<keyword id="KW-0964">Secreted</keyword>
<protein>
    <recommendedName>
        <fullName evidence="8">Tubulinyl-Tyr carboxypeptidase 2</fullName>
        <ecNumber evidence="4 6">3.4.17.17</ecNumber>
    </recommendedName>
    <alternativeName>
        <fullName evidence="7">Vasohibin-2</fullName>
    </alternativeName>
    <alternativeName>
        <fullName>Vasohibin-like protein</fullName>
    </alternativeName>
</protein>
<evidence type="ECO:0000250" key="1">
    <source>
        <dbReference type="UniProtKB" id="Q86V25"/>
    </source>
</evidence>
<evidence type="ECO:0000256" key="2">
    <source>
        <dbReference type="SAM" id="MobiDB-lite"/>
    </source>
</evidence>
<evidence type="ECO:0000269" key="3">
    <source>
    </source>
</evidence>
<evidence type="ECO:0000269" key="4">
    <source>
    </source>
</evidence>
<evidence type="ECO:0000269" key="5">
    <source>
    </source>
</evidence>
<evidence type="ECO:0000269" key="6">
    <source>
    </source>
</evidence>
<evidence type="ECO:0000303" key="7">
    <source>
    </source>
</evidence>
<evidence type="ECO:0000305" key="8"/>
<evidence type="ECO:0000305" key="9">
    <source>
    </source>
</evidence>
<evidence type="ECO:0000312" key="10">
    <source>
        <dbReference type="MGI" id="MGI:2444826"/>
    </source>
</evidence>
<evidence type="ECO:0007744" key="11">
    <source>
        <dbReference type="PDB" id="6JZC"/>
    </source>
</evidence>
<evidence type="ECO:0007744" key="12">
    <source>
        <dbReference type="PDB" id="6JZD"/>
    </source>
</evidence>
<evidence type="ECO:0007744" key="13">
    <source>
        <dbReference type="PDB" id="6JZE"/>
    </source>
</evidence>
<evidence type="ECO:0007829" key="14">
    <source>
        <dbReference type="PDB" id="6JZC"/>
    </source>
</evidence>
<evidence type="ECO:0007829" key="15">
    <source>
        <dbReference type="PDB" id="6JZE"/>
    </source>
</evidence>
<organism>
    <name type="scientific">Mus musculus</name>
    <name type="common">Mouse</name>
    <dbReference type="NCBI Taxonomy" id="10090"/>
    <lineage>
        <taxon>Eukaryota</taxon>
        <taxon>Metazoa</taxon>
        <taxon>Chordata</taxon>
        <taxon>Craniata</taxon>
        <taxon>Vertebrata</taxon>
        <taxon>Euteleostomi</taxon>
        <taxon>Mammalia</taxon>
        <taxon>Eutheria</taxon>
        <taxon>Euarchontoglires</taxon>
        <taxon>Glires</taxon>
        <taxon>Rodentia</taxon>
        <taxon>Myomorpha</taxon>
        <taxon>Muroidea</taxon>
        <taxon>Muridae</taxon>
        <taxon>Murinae</taxon>
        <taxon>Mus</taxon>
        <taxon>Mus</taxon>
    </lineage>
</organism>
<dbReference type="EC" id="3.4.17.17" evidence="4 6"/>
<dbReference type="EMBL" id="AK045261">
    <property type="protein sequence ID" value="BAC32286.1"/>
    <property type="molecule type" value="mRNA"/>
</dbReference>
<dbReference type="EMBL" id="AK078596">
    <property type="protein sequence ID" value="BAC37339.1"/>
    <property type="molecule type" value="mRNA"/>
</dbReference>
<dbReference type="EMBL" id="AK140989">
    <property type="protein sequence ID" value="BAE24539.1"/>
    <property type="molecule type" value="mRNA"/>
</dbReference>
<dbReference type="EMBL" id="AK163193">
    <property type="protein sequence ID" value="BAE37229.1"/>
    <property type="molecule type" value="mRNA"/>
</dbReference>
<dbReference type="EMBL" id="CH466555">
    <property type="protein sequence ID" value="EDL13013.1"/>
    <property type="molecule type" value="Genomic_DNA"/>
</dbReference>
<dbReference type="EMBL" id="BC024141">
    <property type="protein sequence ID" value="AAH24141.1"/>
    <property type="status" value="ALT_INIT"/>
    <property type="molecule type" value="mRNA"/>
</dbReference>
<dbReference type="CCDS" id="CCDS48482.1"/>
<dbReference type="RefSeq" id="NP_659128.2">
    <property type="nucleotide sequence ID" value="NM_144879.2"/>
</dbReference>
<dbReference type="PDB" id="6JZC">
    <property type="method" value="X-ray"/>
    <property type="resolution" value="2.20 A"/>
    <property type="chains" value="A/B=1-355"/>
</dbReference>
<dbReference type="PDB" id="6JZD">
    <property type="method" value="X-ray"/>
    <property type="resolution" value="2.48 A"/>
    <property type="chains" value="A=1-355"/>
</dbReference>
<dbReference type="PDB" id="6JZE">
    <property type="method" value="X-ray"/>
    <property type="resolution" value="2.51 A"/>
    <property type="chains" value="A=47-355"/>
</dbReference>
<dbReference type="PDBsum" id="6JZC"/>
<dbReference type="PDBsum" id="6JZD"/>
<dbReference type="PDBsum" id="6JZE"/>
<dbReference type="SMR" id="Q8C5G2"/>
<dbReference type="FunCoup" id="Q8C5G2">
    <property type="interactions" value="840"/>
</dbReference>
<dbReference type="STRING" id="10090.ENSMUSP00000036768"/>
<dbReference type="iPTMnet" id="Q8C5G2"/>
<dbReference type="PhosphoSitePlus" id="Q8C5G2"/>
<dbReference type="PaxDb" id="10090-ENSMUSP00000036768"/>
<dbReference type="ProteomicsDB" id="297910"/>
<dbReference type="Antibodypedia" id="47116">
    <property type="antibodies" value="146 antibodies from 22 providers"/>
</dbReference>
<dbReference type="DNASU" id="226841"/>
<dbReference type="Ensembl" id="ENSMUST00000047409.9">
    <property type="protein sequence ID" value="ENSMUSP00000036768.7"/>
    <property type="gene ID" value="ENSMUSG00000037568.13"/>
</dbReference>
<dbReference type="Ensembl" id="ENSMUST00000166139.7">
    <property type="protein sequence ID" value="ENSMUSP00000127626.2"/>
    <property type="gene ID" value="ENSMUSG00000037568.13"/>
</dbReference>
<dbReference type="GeneID" id="226841"/>
<dbReference type="KEGG" id="mmu:226841"/>
<dbReference type="UCSC" id="uc007ebr.2">
    <property type="organism name" value="mouse"/>
</dbReference>
<dbReference type="AGR" id="MGI:2444826"/>
<dbReference type="CTD" id="79805"/>
<dbReference type="MGI" id="MGI:2444826">
    <property type="gene designation" value="Vash2"/>
</dbReference>
<dbReference type="VEuPathDB" id="HostDB:ENSMUSG00000037568"/>
<dbReference type="eggNOG" id="ENOG502QPPX">
    <property type="taxonomic scope" value="Eukaryota"/>
</dbReference>
<dbReference type="GeneTree" id="ENSGT00390000012703"/>
<dbReference type="HOGENOM" id="CLU_061405_0_0_1"/>
<dbReference type="InParanoid" id="Q8C5G2"/>
<dbReference type="OMA" id="WERMWAH"/>
<dbReference type="OrthoDB" id="9974232at2759"/>
<dbReference type="PhylomeDB" id="Q8C5G2"/>
<dbReference type="TreeFam" id="TF329370"/>
<dbReference type="BioGRID-ORCS" id="226841">
    <property type="hits" value="1 hit in 77 CRISPR screens"/>
</dbReference>
<dbReference type="PRO" id="PR:Q8C5G2"/>
<dbReference type="Proteomes" id="UP000000589">
    <property type="component" value="Chromosome 1"/>
</dbReference>
<dbReference type="RNAct" id="Q8C5G2">
    <property type="molecule type" value="protein"/>
</dbReference>
<dbReference type="Bgee" id="ENSMUSG00000037568">
    <property type="expression patterns" value="Expressed in humerus cartilage element and 158 other cell types or tissues"/>
</dbReference>
<dbReference type="GO" id="GO:0005737">
    <property type="term" value="C:cytoplasm"/>
    <property type="evidence" value="ECO:0000266"/>
    <property type="project" value="MGI"/>
</dbReference>
<dbReference type="GO" id="GO:0005856">
    <property type="term" value="C:cytoskeleton"/>
    <property type="evidence" value="ECO:0007669"/>
    <property type="project" value="UniProtKB-SubCell"/>
</dbReference>
<dbReference type="GO" id="GO:0005829">
    <property type="term" value="C:cytosol"/>
    <property type="evidence" value="ECO:0007669"/>
    <property type="project" value="Ensembl"/>
</dbReference>
<dbReference type="GO" id="GO:0005576">
    <property type="term" value="C:extracellular region"/>
    <property type="evidence" value="ECO:0007669"/>
    <property type="project" value="UniProtKB-SubCell"/>
</dbReference>
<dbReference type="GO" id="GO:0003779">
    <property type="term" value="F:actin binding"/>
    <property type="evidence" value="ECO:0000314"/>
    <property type="project" value="UniProtKB"/>
</dbReference>
<dbReference type="GO" id="GO:0004181">
    <property type="term" value="F:metallocarboxypeptidase activity"/>
    <property type="evidence" value="ECO:0000314"/>
    <property type="project" value="UniProtKB"/>
</dbReference>
<dbReference type="GO" id="GO:0008017">
    <property type="term" value="F:microtubule binding"/>
    <property type="evidence" value="ECO:0000250"/>
    <property type="project" value="UniProtKB"/>
</dbReference>
<dbReference type="GO" id="GO:0106423">
    <property type="term" value="F:tubulin-tyrosine carboxypeptidase"/>
    <property type="evidence" value="ECO:0007669"/>
    <property type="project" value="UniProtKB-EC"/>
</dbReference>
<dbReference type="GO" id="GO:0061564">
    <property type="term" value="P:axon development"/>
    <property type="evidence" value="ECO:0000250"/>
    <property type="project" value="UniProtKB"/>
</dbReference>
<dbReference type="GO" id="GO:0140253">
    <property type="term" value="P:cell-cell fusion"/>
    <property type="evidence" value="ECO:0000266"/>
    <property type="project" value="MGI"/>
</dbReference>
<dbReference type="GO" id="GO:0060716">
    <property type="term" value="P:labyrinthine layer blood vessel development"/>
    <property type="evidence" value="ECO:0000315"/>
    <property type="project" value="MGI"/>
</dbReference>
<dbReference type="GO" id="GO:0060711">
    <property type="term" value="P:labyrinthine layer development"/>
    <property type="evidence" value="ECO:0000315"/>
    <property type="project" value="MGI"/>
</dbReference>
<dbReference type="GO" id="GO:0060674">
    <property type="term" value="P:placenta blood vessel development"/>
    <property type="evidence" value="ECO:0000315"/>
    <property type="project" value="MGI"/>
</dbReference>
<dbReference type="GO" id="GO:0045766">
    <property type="term" value="P:positive regulation of angiogenesis"/>
    <property type="evidence" value="ECO:0000315"/>
    <property type="project" value="MGI"/>
</dbReference>
<dbReference type="GO" id="GO:0001938">
    <property type="term" value="P:positive regulation of endothelial cell proliferation"/>
    <property type="evidence" value="ECO:0000266"/>
    <property type="project" value="MGI"/>
</dbReference>
<dbReference type="GO" id="GO:0006508">
    <property type="term" value="P:proteolysis"/>
    <property type="evidence" value="ECO:0000314"/>
    <property type="project" value="UniProtKB"/>
</dbReference>
<dbReference type="GO" id="GO:0000768">
    <property type="term" value="P:syncytium formation by plasma membrane fusion"/>
    <property type="evidence" value="ECO:0000315"/>
    <property type="project" value="MGI"/>
</dbReference>
<dbReference type="InterPro" id="IPR028131">
    <property type="entry name" value="VASH1"/>
</dbReference>
<dbReference type="PANTHER" id="PTHR15750:SF4">
    <property type="entry name" value="TUBULINYL-TYR CARBOXYPEPTIDASE 2"/>
    <property type="match status" value="1"/>
</dbReference>
<dbReference type="PANTHER" id="PTHR15750">
    <property type="entry name" value="VASOHIBIN-1-LIKE ISOFORM X2"/>
    <property type="match status" value="1"/>
</dbReference>
<dbReference type="Pfam" id="PF14822">
    <property type="entry name" value="Vasohibin"/>
    <property type="match status" value="1"/>
</dbReference>
<accession>Q8C5G2</accession>
<accession>Q3TR02</accession>
<accession>Q8BRA1</accession>
<accession>Q8R1R8</accession>
<comment type="function">
    <text evidence="3 4 5">Tyrosine carboxypeptidase that removes the C-terminal tyrosine residue of alpha-tubulin, thereby regulating microtubule dynamics and function (PubMed:29146868). Acts as an activator of angiogenesis: expressed in infiltrating mononuclear cells in the sprouting front to promote angiogenesis (PubMed:19204325). Plays a role in axon formation (PubMed:31235911).</text>
</comment>
<comment type="catalytic activity">
    <reaction evidence="4 6">
        <text>C-terminal L-alpha-aminoacyl-L-glutamyl-L-glutamyl-L-tyrosyl-[tubulin] + H2O = C-terminal L-alpha-aminoacyl-L-glutamyl-L-glutamyl-[tubulin] + L-tyrosine</text>
        <dbReference type="Rhea" id="RHEA:57444"/>
        <dbReference type="Rhea" id="RHEA-COMP:16434"/>
        <dbReference type="Rhea" id="RHEA-COMP:16435"/>
        <dbReference type="ChEBI" id="CHEBI:15377"/>
        <dbReference type="ChEBI" id="CHEBI:58315"/>
        <dbReference type="ChEBI" id="CHEBI:149554"/>
        <dbReference type="ChEBI" id="CHEBI:149555"/>
        <dbReference type="EC" id="3.4.17.17"/>
    </reaction>
</comment>
<comment type="subunit">
    <text evidence="4 6">Interacts with SVBP; interaction enhances VASH2 tyrosine carboxypeptidase activity.</text>
</comment>
<comment type="subcellular location">
    <subcellularLocation>
        <location evidence="1">Cytoplasm</location>
    </subcellularLocation>
    <subcellularLocation>
        <location evidence="1">Secreted</location>
    </subcellularLocation>
    <subcellularLocation>
        <location evidence="1">Cytoplasm</location>
        <location evidence="1">Cytoskeleton</location>
    </subcellularLocation>
    <text evidence="1">Mainly localizes in the cytoplasm. Some fraction is secreted via a non-canonical secretion system; interaction with SVBP promotes secretion. Associates with microtubules (By similarity).</text>
</comment>
<comment type="tissue specificity">
    <text evidence="4">Preferentially expressed in bone marrow-derived mononuclear cells at the sprouting front.</text>
</comment>
<comment type="similarity">
    <text evidence="8">Belongs to the transglutaminase-like superfamily. Vasohibin family.</text>
</comment>
<comment type="sequence caution" evidence="8">
    <conflict type="erroneous initiation">
        <sequence resource="EMBL-CDS" id="AAH24141"/>
    </conflict>
    <text>Truncated N-terminus.</text>
</comment>
<gene>
    <name evidence="10" type="primary">Vash2</name>
    <name type="synonym">Vashl</name>
</gene>
<feature type="chain" id="PRO_0000189983" description="Tubulinyl-Tyr carboxypeptidase 2">
    <location>
        <begin position="1"/>
        <end position="355"/>
    </location>
</feature>
<feature type="region of interest" description="Disordered" evidence="2">
    <location>
        <begin position="1"/>
        <end position="45"/>
    </location>
</feature>
<feature type="region of interest" description="Disordered" evidence="2">
    <location>
        <begin position="297"/>
        <end position="335"/>
    </location>
</feature>
<feature type="compositionally biased region" description="Basic residues" evidence="2">
    <location>
        <begin position="11"/>
        <end position="26"/>
    </location>
</feature>
<feature type="compositionally biased region" description="Basic residues" evidence="2">
    <location>
        <begin position="308"/>
        <end position="319"/>
    </location>
</feature>
<feature type="active site" evidence="4 9">
    <location>
        <position position="158"/>
    </location>
</feature>
<feature type="active site" evidence="9">
    <location>
        <position position="193"/>
    </location>
</feature>
<feature type="active site" evidence="9">
    <location>
        <position position="210"/>
    </location>
</feature>
<feature type="modified residue" description="Phosphoserine" evidence="1">
    <location>
        <position position="302"/>
    </location>
</feature>
<feature type="mutagenesis site" description="No effect on tyrosine carboxypeptidase activity." evidence="6">
    <original>K</original>
    <variation>E</variation>
    <location>
        <position position="119"/>
    </location>
</feature>
<feature type="mutagenesis site" description="Slightly reduced tyrosine carboxypeptidase activity." evidence="6">
    <original>R</original>
    <variation>E</variation>
    <location>
        <position position="134"/>
    </location>
</feature>
<feature type="mutagenesis site" description="Strongly reduced tyrosine carboxypeptidase activity." evidence="6">
    <original>K</original>
    <variation>E</variation>
    <location>
        <position position="135"/>
    </location>
</feature>
<feature type="mutagenesis site" description="Strongly reduced tyrosine carboxypeptidase activity." evidence="6">
    <original>K</original>
    <variation>E</variation>
    <location>
        <position position="157"/>
    </location>
</feature>
<feature type="mutagenesis site" description="Abolished tyrosine carboxypeptidase activity." evidence="4 6">
    <original>C</original>
    <variation>A</variation>
    <location>
        <position position="158"/>
    </location>
</feature>
<feature type="mutagenesis site" description="No effect on tyrosine carboxypeptidase activity." evidence="6">
    <original>K</original>
    <variation>E</variation>
    <location>
        <position position="183"/>
    </location>
</feature>
<feature type="mutagenesis site" description="Strongly reduced tyrosine carboxypeptidase activity." evidence="6">
    <original>H</original>
    <variation>A</variation>
    <location>
        <position position="193"/>
    </location>
</feature>
<feature type="mutagenesis site" description="Strongly reduced tyrosine carboxypeptidase activity." evidence="6">
    <original>S</original>
    <variation>A</variation>
    <location>
        <position position="210"/>
    </location>
</feature>
<feature type="mutagenesis site" description="Strongly reduced tyrosine carboxypeptidase activity." evidence="6">
    <original>R</original>
    <variation>E</variation>
    <location>
        <position position="211"/>
    </location>
</feature>
<feature type="mutagenesis site" description="Strongly reduced tyrosine carboxypeptidase activity." evidence="6">
    <original>R</original>
    <variation>E</variation>
    <location>
        <position position="212"/>
    </location>
</feature>
<feature type="mutagenesis site" description="Strongly reduced tyrosine carboxypeptidase activity." evidence="6">
    <original>K</original>
    <variation>E</variation>
    <location>
        <position position="218"/>
    </location>
</feature>
<feature type="mutagenesis site" description="Reduced tyrosine carboxypeptidase activity." evidence="6">
    <original>K</original>
    <variation>E</variation>
    <location>
        <position position="238"/>
    </location>
</feature>
<feature type="mutagenesis site" description="Reduced tyrosine carboxypeptidase activity." evidence="6">
    <original>K</original>
    <variation>E</variation>
    <location>
        <position position="247"/>
    </location>
</feature>
<feature type="sequence conflict" description="In Ref. 1; BAC37339." evidence="8" ref="1">
    <original>A</original>
    <variation>D</variation>
    <location>
        <position position="341"/>
    </location>
</feature>
<feature type="helix" evidence="14">
    <location>
        <begin position="60"/>
        <end position="73"/>
    </location>
</feature>
<feature type="helix" evidence="14">
    <location>
        <begin position="77"/>
        <end position="84"/>
    </location>
</feature>
<feature type="helix" evidence="14">
    <location>
        <begin position="107"/>
        <end position="121"/>
    </location>
</feature>
<feature type="strand" evidence="14">
    <location>
        <begin position="126"/>
        <end position="131"/>
    </location>
</feature>
<feature type="helix" evidence="14">
    <location>
        <begin position="139"/>
        <end position="152"/>
    </location>
</feature>
<feature type="helix" evidence="14">
    <location>
        <begin position="158"/>
        <end position="169"/>
    </location>
</feature>
<feature type="strand" evidence="14">
    <location>
        <begin position="176"/>
        <end position="186"/>
    </location>
</feature>
<feature type="strand" evidence="14">
    <location>
        <begin position="189"/>
        <end position="200"/>
    </location>
</feature>
<feature type="strand" evidence="14">
    <location>
        <begin position="203"/>
        <end position="207"/>
    </location>
</feature>
<feature type="helix" evidence="14">
    <location>
        <begin position="213"/>
        <end position="215"/>
    </location>
</feature>
<feature type="strand" evidence="14">
    <location>
        <begin position="218"/>
        <end position="224"/>
    </location>
</feature>
<feature type="helix" evidence="14">
    <location>
        <begin position="225"/>
        <end position="237"/>
    </location>
</feature>
<feature type="turn" evidence="14">
    <location>
        <begin position="238"/>
        <end position="240"/>
    </location>
</feature>
<feature type="strand" evidence="14">
    <location>
        <begin position="242"/>
        <end position="248"/>
    </location>
</feature>
<feature type="strand" evidence="14">
    <location>
        <begin position="266"/>
        <end position="269"/>
    </location>
</feature>
<feature type="helix" evidence="14">
    <location>
        <begin position="271"/>
        <end position="273"/>
    </location>
</feature>
<feature type="helix" evidence="14">
    <location>
        <begin position="276"/>
        <end position="291"/>
    </location>
</feature>
<feature type="turn" evidence="15">
    <location>
        <begin position="298"/>
        <end position="300"/>
    </location>
</feature>
<reference key="1">
    <citation type="journal article" date="2005" name="Science">
        <title>The transcriptional landscape of the mammalian genome.</title>
        <authorList>
            <person name="Carninci P."/>
            <person name="Kasukawa T."/>
            <person name="Katayama S."/>
            <person name="Gough J."/>
            <person name="Frith M.C."/>
            <person name="Maeda N."/>
            <person name="Oyama R."/>
            <person name="Ravasi T."/>
            <person name="Lenhard B."/>
            <person name="Wells C."/>
            <person name="Kodzius R."/>
            <person name="Shimokawa K."/>
            <person name="Bajic V.B."/>
            <person name="Brenner S.E."/>
            <person name="Batalov S."/>
            <person name="Forrest A.R."/>
            <person name="Zavolan M."/>
            <person name="Davis M.J."/>
            <person name="Wilming L.G."/>
            <person name="Aidinis V."/>
            <person name="Allen J.E."/>
            <person name="Ambesi-Impiombato A."/>
            <person name="Apweiler R."/>
            <person name="Aturaliya R.N."/>
            <person name="Bailey T.L."/>
            <person name="Bansal M."/>
            <person name="Baxter L."/>
            <person name="Beisel K.W."/>
            <person name="Bersano T."/>
            <person name="Bono H."/>
            <person name="Chalk A.M."/>
            <person name="Chiu K.P."/>
            <person name="Choudhary V."/>
            <person name="Christoffels A."/>
            <person name="Clutterbuck D.R."/>
            <person name="Crowe M.L."/>
            <person name="Dalla E."/>
            <person name="Dalrymple B.P."/>
            <person name="de Bono B."/>
            <person name="Della Gatta G."/>
            <person name="di Bernardo D."/>
            <person name="Down T."/>
            <person name="Engstrom P."/>
            <person name="Fagiolini M."/>
            <person name="Faulkner G."/>
            <person name="Fletcher C.F."/>
            <person name="Fukushima T."/>
            <person name="Furuno M."/>
            <person name="Futaki S."/>
            <person name="Gariboldi M."/>
            <person name="Georgii-Hemming P."/>
            <person name="Gingeras T.R."/>
            <person name="Gojobori T."/>
            <person name="Green R.E."/>
            <person name="Gustincich S."/>
            <person name="Harbers M."/>
            <person name="Hayashi Y."/>
            <person name="Hensch T.K."/>
            <person name="Hirokawa N."/>
            <person name="Hill D."/>
            <person name="Huminiecki L."/>
            <person name="Iacono M."/>
            <person name="Ikeo K."/>
            <person name="Iwama A."/>
            <person name="Ishikawa T."/>
            <person name="Jakt M."/>
            <person name="Kanapin A."/>
            <person name="Katoh M."/>
            <person name="Kawasawa Y."/>
            <person name="Kelso J."/>
            <person name="Kitamura H."/>
            <person name="Kitano H."/>
            <person name="Kollias G."/>
            <person name="Krishnan S.P."/>
            <person name="Kruger A."/>
            <person name="Kummerfeld S.K."/>
            <person name="Kurochkin I.V."/>
            <person name="Lareau L.F."/>
            <person name="Lazarevic D."/>
            <person name="Lipovich L."/>
            <person name="Liu J."/>
            <person name="Liuni S."/>
            <person name="McWilliam S."/>
            <person name="Madan Babu M."/>
            <person name="Madera M."/>
            <person name="Marchionni L."/>
            <person name="Matsuda H."/>
            <person name="Matsuzawa S."/>
            <person name="Miki H."/>
            <person name="Mignone F."/>
            <person name="Miyake S."/>
            <person name="Morris K."/>
            <person name="Mottagui-Tabar S."/>
            <person name="Mulder N."/>
            <person name="Nakano N."/>
            <person name="Nakauchi H."/>
            <person name="Ng P."/>
            <person name="Nilsson R."/>
            <person name="Nishiguchi S."/>
            <person name="Nishikawa S."/>
            <person name="Nori F."/>
            <person name="Ohara O."/>
            <person name="Okazaki Y."/>
            <person name="Orlando V."/>
            <person name="Pang K.C."/>
            <person name="Pavan W.J."/>
            <person name="Pavesi G."/>
            <person name="Pesole G."/>
            <person name="Petrovsky N."/>
            <person name="Piazza S."/>
            <person name="Reed J."/>
            <person name="Reid J.F."/>
            <person name="Ring B.Z."/>
            <person name="Ringwald M."/>
            <person name="Rost B."/>
            <person name="Ruan Y."/>
            <person name="Salzberg S.L."/>
            <person name="Sandelin A."/>
            <person name="Schneider C."/>
            <person name="Schoenbach C."/>
            <person name="Sekiguchi K."/>
            <person name="Semple C.A."/>
            <person name="Seno S."/>
            <person name="Sessa L."/>
            <person name="Sheng Y."/>
            <person name="Shibata Y."/>
            <person name="Shimada H."/>
            <person name="Shimada K."/>
            <person name="Silva D."/>
            <person name="Sinclair B."/>
            <person name="Sperling S."/>
            <person name="Stupka E."/>
            <person name="Sugiura K."/>
            <person name="Sultana R."/>
            <person name="Takenaka Y."/>
            <person name="Taki K."/>
            <person name="Tammoja K."/>
            <person name="Tan S.L."/>
            <person name="Tang S."/>
            <person name="Taylor M.S."/>
            <person name="Tegner J."/>
            <person name="Teichmann S.A."/>
            <person name="Ueda H.R."/>
            <person name="van Nimwegen E."/>
            <person name="Verardo R."/>
            <person name="Wei C.L."/>
            <person name="Yagi K."/>
            <person name="Yamanishi H."/>
            <person name="Zabarovsky E."/>
            <person name="Zhu S."/>
            <person name="Zimmer A."/>
            <person name="Hide W."/>
            <person name="Bult C."/>
            <person name="Grimmond S.M."/>
            <person name="Teasdale R.D."/>
            <person name="Liu E.T."/>
            <person name="Brusic V."/>
            <person name="Quackenbush J."/>
            <person name="Wahlestedt C."/>
            <person name="Mattick J.S."/>
            <person name="Hume D.A."/>
            <person name="Kai C."/>
            <person name="Sasaki D."/>
            <person name="Tomaru Y."/>
            <person name="Fukuda S."/>
            <person name="Kanamori-Katayama M."/>
            <person name="Suzuki M."/>
            <person name="Aoki J."/>
            <person name="Arakawa T."/>
            <person name="Iida J."/>
            <person name="Imamura K."/>
            <person name="Itoh M."/>
            <person name="Kato T."/>
            <person name="Kawaji H."/>
            <person name="Kawagashira N."/>
            <person name="Kawashima T."/>
            <person name="Kojima M."/>
            <person name="Kondo S."/>
            <person name="Konno H."/>
            <person name="Nakano K."/>
            <person name="Ninomiya N."/>
            <person name="Nishio T."/>
            <person name="Okada M."/>
            <person name="Plessy C."/>
            <person name="Shibata K."/>
            <person name="Shiraki T."/>
            <person name="Suzuki S."/>
            <person name="Tagami M."/>
            <person name="Waki K."/>
            <person name="Watahiki A."/>
            <person name="Okamura-Oho Y."/>
            <person name="Suzuki H."/>
            <person name="Kawai J."/>
            <person name="Hayashizaki Y."/>
        </authorList>
    </citation>
    <scope>NUCLEOTIDE SEQUENCE [LARGE SCALE MRNA]</scope>
    <source>
        <strain>C57BL/6J</strain>
        <tissue>Cerebellum</tissue>
        <tissue>Gonad</tissue>
        <tissue>Head</tissue>
    </source>
</reference>
<reference key="2">
    <citation type="submission" date="2005-09" db="EMBL/GenBank/DDBJ databases">
        <authorList>
            <person name="Mural R.J."/>
            <person name="Adams M.D."/>
            <person name="Myers E.W."/>
            <person name="Smith H.O."/>
            <person name="Venter J.C."/>
        </authorList>
    </citation>
    <scope>NUCLEOTIDE SEQUENCE [LARGE SCALE GENOMIC DNA]</scope>
</reference>
<reference key="3">
    <citation type="journal article" date="2004" name="Genome Res.">
        <title>The status, quality, and expansion of the NIH full-length cDNA project: the Mammalian Gene Collection (MGC).</title>
        <authorList>
            <consortium name="The MGC Project Team"/>
        </authorList>
    </citation>
    <scope>NUCLEOTIDE SEQUENCE [LARGE SCALE MRNA]</scope>
    <source>
        <strain>FVB/N</strain>
        <tissue>Mammary tumor</tissue>
    </source>
</reference>
<reference key="4">
    <citation type="journal article" date="2009" name="Blood">
        <title>Distinctive localization and opposed roles of vasohibin-1 and vasohibin-2 in the regulation of angiogenesis.</title>
        <authorList>
            <person name="Kimura H."/>
            <person name="Miyashita H."/>
            <person name="Suzuki Y."/>
            <person name="Kobayashi M."/>
            <person name="Watanabe K."/>
            <person name="Sonoda H."/>
            <person name="Ohta H."/>
            <person name="Fujiwara T."/>
            <person name="Shimosegawa T."/>
            <person name="Sato Y."/>
        </authorList>
    </citation>
    <scope>FUNCTION</scope>
    <scope>TISSUE SPECIFICITY</scope>
</reference>
<reference key="5">
    <citation type="journal article" date="2016" name="Bioinformatics">
        <title>Vasohibins: new transglutaminase-like cysteine proteases possessing a non-canonical Cys-His-Ser catalytic triad.</title>
        <authorList>
            <person name="Sanchez-Pulido L."/>
            <person name="Ponting C.P."/>
        </authorList>
    </citation>
    <scope>IDENTIFICATION AS A PROTEASE</scope>
    <scope>ACTIVE SITES</scope>
</reference>
<reference key="6">
    <citation type="journal article" date="2017" name="Science">
        <title>Vasohibins/SVBP are tubulin carboxypeptidases (TCPs) that regulate neuron differentiation.</title>
        <authorList>
            <person name="Aillaud C."/>
            <person name="Bosc C."/>
            <person name="Peris L."/>
            <person name="Bosson A."/>
            <person name="Heemeryck P."/>
            <person name="Van Dijk J."/>
            <person name="Le Friec J."/>
            <person name="Boulan B."/>
            <person name="Vossier F."/>
            <person name="Sanman L.E."/>
            <person name="Syed S."/>
            <person name="Amara N."/>
            <person name="Coute Y."/>
            <person name="Lafanechere L."/>
            <person name="Denarier E."/>
            <person name="Delphin C."/>
            <person name="Pelletier L."/>
            <person name="Humbert S."/>
            <person name="Bogyo M."/>
            <person name="Andrieux A."/>
            <person name="Rogowski K."/>
            <person name="Moutin M.J."/>
        </authorList>
    </citation>
    <scope>FUNCTION</scope>
    <scope>CATALYTIC ACTIVITY</scope>
    <scope>INTERACTION WITH SVBP</scope>
    <scope>ACTIVE SITE</scope>
    <scope>MUTAGENESIS OF CYS-158</scope>
</reference>
<reference key="7">
    <citation type="journal article" date="2019" name="Nat. Struct. Mol. Biol.">
        <title>Structural basis of tubulin detyrosination by the vasohibin-SVBP enzyme complex.</title>
        <authorList>
            <person name="Wang N."/>
            <person name="Bosc C."/>
            <person name="Ryul Choi S."/>
            <person name="Boulan B."/>
            <person name="Peris L."/>
            <person name="Olieric N."/>
            <person name="Bao H."/>
            <person name="Krichen F."/>
            <person name="Chen L."/>
            <person name="Andrieux A."/>
            <person name="Olieric V."/>
            <person name="Moutin M.J."/>
            <person name="Steinmetz M.O."/>
            <person name="Huang H."/>
        </authorList>
    </citation>
    <scope>FUNCTION</scope>
</reference>
<reference evidence="11 12 13" key="8">
    <citation type="journal article" date="2019" name="Nat. Commun.">
        <title>Structural basis of tubulin detyrosination by VASH2/SVBP heterodimer.</title>
        <authorList>
            <person name="Zhou C."/>
            <person name="Yan L."/>
            <person name="Zhang W.H."/>
            <person name="Liu Z."/>
        </authorList>
    </citation>
    <scope>X-RAY CRYSTALLOGRAPHY (2.20 ANGSTROMS) OF 48-301 IN COMPLEX WITH SVBP</scope>
    <scope>INTERACTION WITH SVBP</scope>
    <scope>FUNCTION</scope>
    <scope>CATALYTIC ACTIVITY</scope>
    <scope>MUTAGENESIS OF LYS-119; ARG-134; LYS-135; LYS-157; CYS-158; LYS-183; HIS-193; SER-210; ARG-211; ARG-212; LYS-218; LYS-238 AND LYS-247</scope>
</reference>
<name>VASH2_MOUSE</name>
<sequence length="355" mass="40499">MTGSAADTHRCPHPKITKGTRSRSSHARPVSLATSGGSEEEDKDGGVLFHVNKSGFPIDSHTWERMWLHVAKVHPRGGEMVGAIRNAAFLAKPSIPQVPNYRLSMTIPDWLQAIQNYMKTLQYNHTGTQFFEIRKMRPLSGLMETAKEMTRESLPIKCLEAVILGIYLTNGQPSIERFPISFKTYFSGNYFHHVVLGIYCNGYYGSLGMSRRAELMDKPLTFRTLSDLVFDFEDSYKKYLHTVKKVKIGLYVPHEPHSFQPIEWKQLVLNVSKMLRADIRKELEKYARDMRMKILKPASAHSPTQVRSRGKSLSPRRRQASPPRRLGRRDKSPALTEKKVADLGTLNEVGYQIRI</sequence>